<reference key="1">
    <citation type="submission" date="2007-07" db="EMBL/GenBank/DDBJ databases">
        <title>Genome sequence of Campylobacter curvus 525.92 isolated from human feces.</title>
        <authorList>
            <person name="Fouts D.E."/>
            <person name="Mongodin E.F."/>
            <person name="Puiu D."/>
            <person name="Sebastian Y."/>
            <person name="Miller W.G."/>
            <person name="Mandrell R.E."/>
            <person name="Lastovica A.J."/>
            <person name="Nelson K.E."/>
        </authorList>
    </citation>
    <scope>NUCLEOTIDE SEQUENCE [LARGE SCALE GENOMIC DNA]</scope>
    <source>
        <strain>525.92</strain>
    </source>
</reference>
<sequence length="529" mass="59465">MKEIIKSEIFKILGRDFVLEKPKDKSLAHYATPLAFSLAKELKKSPVAIANELACKFENSKIFEVSAVNGYLNFKLKGEFLDEISKDALKNGDKFASGKARQDGSTFIEYISANPTGPLHIGHVRGAVYGDTLARIGTHLGYKIFTEYYINDAGNQIDLLGTSISLAARDVLFHENVEYPQKYYRGEYIVDIANEALKKFGKEIFYDEARNLELAEFGKDIVLDIIKKDLAGVGISIQGWASEKALYKELEPTIEKLKRSNQMYEKEGATYIASTTLGDDNDRVVVRNDGRPTYLAGDIIYHNDKFERNYDHYINIWGADHHGYIARLKAAIHFLGYDENRLEIILMQMVSLLKDGKPYKMSKRAGNAVLMSDIVEEIGSDALRFIFISKANTSSLEFDIDELKKEDSSNPIFYINYAHARVNQIFAKAGKSVSDVLDASLENLDDNAKNLLFEALILPEILEDAFASRQLQKVSDYLKSLAASFHKFYNENRVIGSANEESLLKLFAVVALSLRTALSLIGITAKDRM</sequence>
<evidence type="ECO:0000255" key="1">
    <source>
        <dbReference type="HAMAP-Rule" id="MF_00123"/>
    </source>
</evidence>
<comment type="catalytic activity">
    <reaction evidence="1">
        <text>tRNA(Arg) + L-arginine + ATP = L-arginyl-tRNA(Arg) + AMP + diphosphate</text>
        <dbReference type="Rhea" id="RHEA:20301"/>
        <dbReference type="Rhea" id="RHEA-COMP:9658"/>
        <dbReference type="Rhea" id="RHEA-COMP:9673"/>
        <dbReference type="ChEBI" id="CHEBI:30616"/>
        <dbReference type="ChEBI" id="CHEBI:32682"/>
        <dbReference type="ChEBI" id="CHEBI:33019"/>
        <dbReference type="ChEBI" id="CHEBI:78442"/>
        <dbReference type="ChEBI" id="CHEBI:78513"/>
        <dbReference type="ChEBI" id="CHEBI:456215"/>
        <dbReference type="EC" id="6.1.1.19"/>
    </reaction>
</comment>
<comment type="subunit">
    <text evidence="1">Monomer.</text>
</comment>
<comment type="subcellular location">
    <subcellularLocation>
        <location evidence="1">Cytoplasm</location>
    </subcellularLocation>
</comment>
<comment type="similarity">
    <text evidence="1">Belongs to the class-I aminoacyl-tRNA synthetase family.</text>
</comment>
<name>SYR_CAMC5</name>
<organism>
    <name type="scientific">Campylobacter curvus (strain 525.92)</name>
    <dbReference type="NCBI Taxonomy" id="360105"/>
    <lineage>
        <taxon>Bacteria</taxon>
        <taxon>Pseudomonadati</taxon>
        <taxon>Campylobacterota</taxon>
        <taxon>Epsilonproteobacteria</taxon>
        <taxon>Campylobacterales</taxon>
        <taxon>Campylobacteraceae</taxon>
        <taxon>Campylobacter</taxon>
    </lineage>
</organism>
<accession>A7GWS5</accession>
<feature type="chain" id="PRO_1000018008" description="Arginine--tRNA ligase">
    <location>
        <begin position="1"/>
        <end position="529"/>
    </location>
</feature>
<feature type="short sequence motif" description="'HIGH' region">
    <location>
        <begin position="113"/>
        <end position="123"/>
    </location>
</feature>
<proteinExistence type="inferred from homology"/>
<keyword id="KW-0030">Aminoacyl-tRNA synthetase</keyword>
<keyword id="KW-0067">ATP-binding</keyword>
<keyword id="KW-0963">Cytoplasm</keyword>
<keyword id="KW-0436">Ligase</keyword>
<keyword id="KW-0547">Nucleotide-binding</keyword>
<keyword id="KW-0648">Protein biosynthesis</keyword>
<keyword id="KW-1185">Reference proteome</keyword>
<dbReference type="EC" id="6.1.1.19" evidence="1"/>
<dbReference type="EMBL" id="CP000767">
    <property type="protein sequence ID" value="EAU00901.1"/>
    <property type="molecule type" value="Genomic_DNA"/>
</dbReference>
<dbReference type="RefSeq" id="WP_011991873.1">
    <property type="nucleotide sequence ID" value="NC_009715.2"/>
</dbReference>
<dbReference type="SMR" id="A7GWS5"/>
<dbReference type="STRING" id="360105.CCV52592_1254"/>
<dbReference type="KEGG" id="ccv:CCV52592_1254"/>
<dbReference type="HOGENOM" id="CLU_006406_0_1_7"/>
<dbReference type="OrthoDB" id="9803211at2"/>
<dbReference type="Proteomes" id="UP000006380">
    <property type="component" value="Chromosome"/>
</dbReference>
<dbReference type="GO" id="GO:0005737">
    <property type="term" value="C:cytoplasm"/>
    <property type="evidence" value="ECO:0007669"/>
    <property type="project" value="UniProtKB-SubCell"/>
</dbReference>
<dbReference type="GO" id="GO:0004814">
    <property type="term" value="F:arginine-tRNA ligase activity"/>
    <property type="evidence" value="ECO:0007669"/>
    <property type="project" value="UniProtKB-UniRule"/>
</dbReference>
<dbReference type="GO" id="GO:0005524">
    <property type="term" value="F:ATP binding"/>
    <property type="evidence" value="ECO:0007669"/>
    <property type="project" value="UniProtKB-UniRule"/>
</dbReference>
<dbReference type="GO" id="GO:0006420">
    <property type="term" value="P:arginyl-tRNA aminoacylation"/>
    <property type="evidence" value="ECO:0007669"/>
    <property type="project" value="UniProtKB-UniRule"/>
</dbReference>
<dbReference type="CDD" id="cd00671">
    <property type="entry name" value="ArgRS_core"/>
    <property type="match status" value="1"/>
</dbReference>
<dbReference type="FunFam" id="3.40.50.620:FF:000062">
    <property type="entry name" value="Arginine--tRNA ligase"/>
    <property type="match status" value="1"/>
</dbReference>
<dbReference type="Gene3D" id="3.30.1360.70">
    <property type="entry name" value="Arginyl tRNA synthetase N-terminal domain"/>
    <property type="match status" value="1"/>
</dbReference>
<dbReference type="Gene3D" id="3.40.50.620">
    <property type="entry name" value="HUPs"/>
    <property type="match status" value="1"/>
</dbReference>
<dbReference type="Gene3D" id="1.10.730.10">
    <property type="entry name" value="Isoleucyl-tRNA Synthetase, Domain 1"/>
    <property type="match status" value="1"/>
</dbReference>
<dbReference type="HAMAP" id="MF_00123">
    <property type="entry name" value="Arg_tRNA_synth"/>
    <property type="match status" value="1"/>
</dbReference>
<dbReference type="InterPro" id="IPR001412">
    <property type="entry name" value="aa-tRNA-synth_I_CS"/>
</dbReference>
<dbReference type="InterPro" id="IPR001278">
    <property type="entry name" value="Arg-tRNA-ligase"/>
</dbReference>
<dbReference type="InterPro" id="IPR005148">
    <property type="entry name" value="Arg-tRNA-synth_N"/>
</dbReference>
<dbReference type="InterPro" id="IPR036695">
    <property type="entry name" value="Arg-tRNA-synth_N_sf"/>
</dbReference>
<dbReference type="InterPro" id="IPR035684">
    <property type="entry name" value="ArgRS_core"/>
</dbReference>
<dbReference type="InterPro" id="IPR008909">
    <property type="entry name" value="DALR_anticod-bd"/>
</dbReference>
<dbReference type="InterPro" id="IPR014729">
    <property type="entry name" value="Rossmann-like_a/b/a_fold"/>
</dbReference>
<dbReference type="InterPro" id="IPR009080">
    <property type="entry name" value="tRNAsynth_Ia_anticodon-bd"/>
</dbReference>
<dbReference type="NCBIfam" id="TIGR00456">
    <property type="entry name" value="argS"/>
    <property type="match status" value="1"/>
</dbReference>
<dbReference type="PANTHER" id="PTHR11956:SF5">
    <property type="entry name" value="ARGININE--TRNA LIGASE, CYTOPLASMIC"/>
    <property type="match status" value="1"/>
</dbReference>
<dbReference type="PANTHER" id="PTHR11956">
    <property type="entry name" value="ARGINYL-TRNA SYNTHETASE"/>
    <property type="match status" value="1"/>
</dbReference>
<dbReference type="Pfam" id="PF03485">
    <property type="entry name" value="Arg_tRNA_synt_N"/>
    <property type="match status" value="1"/>
</dbReference>
<dbReference type="Pfam" id="PF05746">
    <property type="entry name" value="DALR_1"/>
    <property type="match status" value="1"/>
</dbReference>
<dbReference type="Pfam" id="PF00750">
    <property type="entry name" value="tRNA-synt_1d"/>
    <property type="match status" value="1"/>
</dbReference>
<dbReference type="PRINTS" id="PR01038">
    <property type="entry name" value="TRNASYNTHARG"/>
</dbReference>
<dbReference type="SMART" id="SM01016">
    <property type="entry name" value="Arg_tRNA_synt_N"/>
    <property type="match status" value="1"/>
</dbReference>
<dbReference type="SMART" id="SM00836">
    <property type="entry name" value="DALR_1"/>
    <property type="match status" value="1"/>
</dbReference>
<dbReference type="SUPFAM" id="SSF47323">
    <property type="entry name" value="Anticodon-binding domain of a subclass of class I aminoacyl-tRNA synthetases"/>
    <property type="match status" value="1"/>
</dbReference>
<dbReference type="SUPFAM" id="SSF55190">
    <property type="entry name" value="Arginyl-tRNA synthetase (ArgRS), N-terminal 'additional' domain"/>
    <property type="match status" value="1"/>
</dbReference>
<dbReference type="SUPFAM" id="SSF52374">
    <property type="entry name" value="Nucleotidylyl transferase"/>
    <property type="match status" value="1"/>
</dbReference>
<dbReference type="PROSITE" id="PS00178">
    <property type="entry name" value="AA_TRNA_LIGASE_I"/>
    <property type="match status" value="1"/>
</dbReference>
<gene>
    <name evidence="1" type="primary">argS</name>
    <name type="ordered locus">Ccur92_03630</name>
    <name type="ORF">CCV52592_1254</name>
</gene>
<protein>
    <recommendedName>
        <fullName evidence="1">Arginine--tRNA ligase</fullName>
        <ecNumber evidence="1">6.1.1.19</ecNumber>
    </recommendedName>
    <alternativeName>
        <fullName evidence="1">Arginyl-tRNA synthetase</fullName>
        <shortName evidence="1">ArgRS</shortName>
    </alternativeName>
</protein>